<gene>
    <name evidence="1" type="primary">cbiD</name>
    <name type="ordered locus">MmarC5_0387</name>
</gene>
<proteinExistence type="inferred from homology"/>
<protein>
    <recommendedName>
        <fullName evidence="1">Cobalt-precorrin-5B C(1)-methyltransferase</fullName>
        <ecNumber evidence="1">2.1.1.195</ecNumber>
    </recommendedName>
    <alternativeName>
        <fullName evidence="1">Cobalt-precorrin-6A synthase</fullName>
    </alternativeName>
</protein>
<accession>A4FWX4</accession>
<name>CBID_METM5</name>
<evidence type="ECO:0000255" key="1">
    <source>
        <dbReference type="HAMAP-Rule" id="MF_00787"/>
    </source>
</evidence>
<comment type="function">
    <text evidence="1">Catalyzes the methylation of C-1 in cobalt-precorrin-5B to form cobalt-precorrin-6A.</text>
</comment>
<comment type="catalytic activity">
    <reaction evidence="1">
        <text>Co-precorrin-5B + S-adenosyl-L-methionine = Co-precorrin-6A + S-adenosyl-L-homocysteine</text>
        <dbReference type="Rhea" id="RHEA:26285"/>
        <dbReference type="ChEBI" id="CHEBI:57856"/>
        <dbReference type="ChEBI" id="CHEBI:59789"/>
        <dbReference type="ChEBI" id="CHEBI:60063"/>
        <dbReference type="ChEBI" id="CHEBI:60064"/>
        <dbReference type="EC" id="2.1.1.195"/>
    </reaction>
</comment>
<comment type="pathway">
    <text evidence="1">Cofactor biosynthesis; adenosylcobalamin biosynthesis; cob(II)yrinate a,c-diamide from sirohydrochlorin (anaerobic route): step 6/10.</text>
</comment>
<comment type="similarity">
    <text evidence="1">Belongs to the CbiD family.</text>
</comment>
<organism>
    <name type="scientific">Methanococcus maripaludis (strain C5 / ATCC BAA-1333)</name>
    <dbReference type="NCBI Taxonomy" id="402880"/>
    <lineage>
        <taxon>Archaea</taxon>
        <taxon>Methanobacteriati</taxon>
        <taxon>Methanobacteriota</taxon>
        <taxon>Methanomada group</taxon>
        <taxon>Methanococci</taxon>
        <taxon>Methanococcales</taxon>
        <taxon>Methanococcaceae</taxon>
        <taxon>Methanococcus</taxon>
    </lineage>
</organism>
<feature type="chain" id="PRO_1000046864" description="Cobalt-precorrin-5B C(1)-methyltransferase">
    <location>
        <begin position="1"/>
        <end position="365"/>
    </location>
</feature>
<reference key="1">
    <citation type="submission" date="2007-03" db="EMBL/GenBank/DDBJ databases">
        <title>Complete sequence of chromosome of Methanococcus maripaludis C5.</title>
        <authorList>
            <consortium name="US DOE Joint Genome Institute"/>
            <person name="Copeland A."/>
            <person name="Lucas S."/>
            <person name="Lapidus A."/>
            <person name="Barry K."/>
            <person name="Glavina del Rio T."/>
            <person name="Dalin E."/>
            <person name="Tice H."/>
            <person name="Pitluck S."/>
            <person name="Chertkov O."/>
            <person name="Brettin T."/>
            <person name="Bruce D."/>
            <person name="Han C."/>
            <person name="Detter J.C."/>
            <person name="Schmutz J."/>
            <person name="Larimer F."/>
            <person name="Land M."/>
            <person name="Hauser L."/>
            <person name="Kyrpides N."/>
            <person name="Mikhailova N."/>
            <person name="Sieprawska-Lupa M."/>
            <person name="Whitman W.B."/>
            <person name="Richardson P."/>
        </authorList>
    </citation>
    <scope>NUCLEOTIDE SEQUENCE [LARGE SCALE GENOMIC DNA]</scope>
    <source>
        <strain>C5 / ATCC BAA-1333</strain>
    </source>
</reference>
<dbReference type="EC" id="2.1.1.195" evidence="1"/>
<dbReference type="EMBL" id="CP000609">
    <property type="protein sequence ID" value="ABO34703.1"/>
    <property type="molecule type" value="Genomic_DNA"/>
</dbReference>
<dbReference type="RefSeq" id="WP_011868158.1">
    <property type="nucleotide sequence ID" value="NC_009135.1"/>
</dbReference>
<dbReference type="SMR" id="A4FWX4"/>
<dbReference type="STRING" id="402880.MmarC5_0387"/>
<dbReference type="GeneID" id="4928999"/>
<dbReference type="KEGG" id="mmq:MmarC5_0387"/>
<dbReference type="eggNOG" id="arCOG04383">
    <property type="taxonomic scope" value="Archaea"/>
</dbReference>
<dbReference type="HOGENOM" id="CLU_041273_1_0_2"/>
<dbReference type="OrthoDB" id="10423at2157"/>
<dbReference type="UniPathway" id="UPA00148">
    <property type="reaction ID" value="UER00227"/>
</dbReference>
<dbReference type="Proteomes" id="UP000000253">
    <property type="component" value="Chromosome"/>
</dbReference>
<dbReference type="GO" id="GO:0043780">
    <property type="term" value="F:cobalt-precorrin-5B C1-methyltransferase activity"/>
    <property type="evidence" value="ECO:0007669"/>
    <property type="project" value="RHEA"/>
</dbReference>
<dbReference type="GO" id="GO:0019251">
    <property type="term" value="P:anaerobic cobalamin biosynthetic process"/>
    <property type="evidence" value="ECO:0007669"/>
    <property type="project" value="UniProtKB-UniRule"/>
</dbReference>
<dbReference type="GO" id="GO:0032259">
    <property type="term" value="P:methylation"/>
    <property type="evidence" value="ECO:0007669"/>
    <property type="project" value="UniProtKB-KW"/>
</dbReference>
<dbReference type="Gene3D" id="3.30.2110.10">
    <property type="entry name" value="CbiD-like"/>
    <property type="match status" value="1"/>
</dbReference>
<dbReference type="HAMAP" id="MF_00787">
    <property type="entry name" value="CbiD"/>
    <property type="match status" value="1"/>
</dbReference>
<dbReference type="InterPro" id="IPR002748">
    <property type="entry name" value="CbiD"/>
</dbReference>
<dbReference type="InterPro" id="IPR036074">
    <property type="entry name" value="CbiD_sf"/>
</dbReference>
<dbReference type="NCBIfam" id="TIGR00312">
    <property type="entry name" value="cbiD"/>
    <property type="match status" value="1"/>
</dbReference>
<dbReference type="PANTHER" id="PTHR35863">
    <property type="entry name" value="COBALT-PRECORRIN-5B C(1)-METHYLTRANSFERASE"/>
    <property type="match status" value="1"/>
</dbReference>
<dbReference type="PANTHER" id="PTHR35863:SF1">
    <property type="entry name" value="COBALT-PRECORRIN-5B C(1)-METHYLTRANSFERASE"/>
    <property type="match status" value="1"/>
</dbReference>
<dbReference type="Pfam" id="PF01888">
    <property type="entry name" value="CbiD"/>
    <property type="match status" value="1"/>
</dbReference>
<dbReference type="PIRSF" id="PIRSF026782">
    <property type="entry name" value="CbiD"/>
    <property type="match status" value="1"/>
</dbReference>
<dbReference type="SUPFAM" id="SSF111342">
    <property type="entry name" value="CbiD-like"/>
    <property type="match status" value="1"/>
</dbReference>
<sequence length="365" mass="39986">MNKIDFRLEKTFGYTTGACAAAGSYSALYFLKNNKKLDFVEILNLKGDSLIIPIKNIEKQGNTAISTVEKFSGEDIDITNGMDIKIKVTLENMDNNCSKSSNVKIIGGTGVGFITKSGLQVKPGKPAINPKPREMIETNLKSLLKDNECVTVKISVPNGDEIAKKTLNPKLGIIGGISILGTTGIVRPMSNDAYKESLAPQIDVALANNFKNLIFVPGNIGTKHAKILLNAEEDQIIEVSNFWDHMLDKAKEKGVKDITVFGHAGKIVKLAGGIFDTHSRVADARNEILCAYTSLATQDVKILQKILQSNTTEDIVEILIEKGILTEVFEKVSKRVVERLSLRWEGINFSCIIIDMEGNILGKYV</sequence>
<keyword id="KW-0169">Cobalamin biosynthesis</keyword>
<keyword id="KW-0489">Methyltransferase</keyword>
<keyword id="KW-0949">S-adenosyl-L-methionine</keyword>
<keyword id="KW-0808">Transferase</keyword>